<keyword id="KW-0035">Amyloplast</keyword>
<keyword id="KW-0150">Chloroplast</keyword>
<keyword id="KW-0328">Glycosyltransferase</keyword>
<keyword id="KW-0934">Plastid</keyword>
<keyword id="KW-0750">Starch biosynthesis</keyword>
<keyword id="KW-0808">Transferase</keyword>
<keyword id="KW-0809">Transit peptide</keyword>
<comment type="function">
    <text>Required for the synthesis of amylose.</text>
</comment>
<comment type="catalytic activity">
    <reaction>
        <text>an NDP-alpha-D-glucose + [(1-&gt;4)-alpha-D-glucosyl](n) = [(1-&gt;4)-alpha-D-glucosyl](n+1) + a ribonucleoside 5'-diphosphate + H(+)</text>
        <dbReference type="Rhea" id="RHEA:15873"/>
        <dbReference type="Rhea" id="RHEA-COMP:9584"/>
        <dbReference type="Rhea" id="RHEA-COMP:9587"/>
        <dbReference type="ChEBI" id="CHEBI:15378"/>
        <dbReference type="ChEBI" id="CHEBI:15444"/>
        <dbReference type="ChEBI" id="CHEBI:57930"/>
        <dbReference type="ChEBI" id="CHEBI:76533"/>
        <dbReference type="EC" id="2.4.1.242"/>
    </reaction>
</comment>
<comment type="pathway">
    <text>Glycan biosynthesis; starch biosynthesis.</text>
</comment>
<comment type="subcellular location">
    <subcellularLocation>
        <location>Plastid</location>
        <location>Chloroplast</location>
    </subcellularLocation>
    <subcellularLocation>
        <location>Plastid</location>
        <location>Amyloplast</location>
    </subcellularLocation>
    <text>Amyloplast or chloroplast, granule-bound.</text>
</comment>
<comment type="similarity">
    <text evidence="2">Belongs to the glycosyltransferase 1 family. Bacterial/plant glycogen synthase subfamily.</text>
</comment>
<comment type="sequence caution" evidence="2">
    <conflict type="frameshift">
        <sequence resource="EMBL-CDS" id="AAA86423"/>
    </conflict>
</comment>
<sequence length="608" mass="66689">MATITASHFVSHVCGGATSGESKVGLGQLALRSQAVTHNGLRPVNKIDMLQLRTSAKKPSKNGRENEGGMAAGTIVCKQQGMNLVFVGCEVGPWCKTGGLGDVLGGLPPALAARGHRVMTVCPRYDQYKDAWDTCVVVELQVGDRIEPVRFFHSYKRGVDRVFVDHPMFLEKVWGKTGSMLYGPKAGKDYKDNQLRFSLLCQAALEAPRVLNLNSSNYFSGPYGEDVVFVANDWHTALLPCYLKTMYQSRGIYMNAKVAFCIHNIAYQGRFAFSDFSLLNLPDEYKGSFDFIDGYDKPVKGRKINWMKAGIREADRVFTVSPNYAKELVSCVSKGVELDNHIRDCGITGICNGMDTQEWNPATDKYLAVKYDITTVMQAKPLLKEALQAAVGLPVDRNIPLIGFIGRLEEQKGSDILYAAISKFISMDVQILILGTGKKKFEQQIEQLEVMYPDKARGVAKFNVPLAHMITAGADFMLIPSRFEPCGLIQLHAMRYGTPCICASTGGLVDTVKEGYTGFHMGAFNVDCETVDPEDVLKVITTVGRALAMYGTLAFTEMIKNCMSQELSWKGPAKNWETVLLSLGVAGSEPGVEGDEIAPLAKENVATP</sequence>
<dbReference type="EC" id="2.4.1.242"/>
<dbReference type="EMBL" id="AB071604">
    <property type="protein sequence ID" value="BAB68126.1"/>
    <property type="molecule type" value="mRNA"/>
</dbReference>
<dbReference type="EMBL" id="AB071976">
    <property type="protein sequence ID" value="BAB68525.1"/>
    <property type="molecule type" value="Genomic_DNA"/>
</dbReference>
<dbReference type="EMBL" id="U44126">
    <property type="protein sequence ID" value="AAA86423.1"/>
    <property type="status" value="ALT_FRAME"/>
    <property type="molecule type" value="mRNA"/>
</dbReference>
<dbReference type="PIR" id="T10906">
    <property type="entry name" value="T10906"/>
</dbReference>
<dbReference type="SMR" id="Q42857"/>
<dbReference type="CAZy" id="GT5">
    <property type="family name" value="Glycosyltransferase Family 5"/>
</dbReference>
<dbReference type="BRENDA" id="2.4.1.242">
    <property type="organism ID" value="2773"/>
</dbReference>
<dbReference type="UniPathway" id="UPA00152"/>
<dbReference type="GO" id="GO:0009501">
    <property type="term" value="C:amyloplast"/>
    <property type="evidence" value="ECO:0007669"/>
    <property type="project" value="UniProtKB-SubCell"/>
</dbReference>
<dbReference type="GO" id="GO:0009507">
    <property type="term" value="C:chloroplast"/>
    <property type="evidence" value="ECO:0007669"/>
    <property type="project" value="UniProtKB-SubCell"/>
</dbReference>
<dbReference type="GO" id="GO:0004373">
    <property type="term" value="F:alpha-1,4-glucan glucosyltransferase (UDP-glucose donor) activity"/>
    <property type="evidence" value="ECO:0007669"/>
    <property type="project" value="InterPro"/>
</dbReference>
<dbReference type="GO" id="GO:0019252">
    <property type="term" value="P:starch biosynthetic process"/>
    <property type="evidence" value="ECO:0007669"/>
    <property type="project" value="UniProtKB-UniPathway"/>
</dbReference>
<dbReference type="CDD" id="cd03791">
    <property type="entry name" value="GT5_Glycogen_synthase_DULL1-like"/>
    <property type="match status" value="1"/>
</dbReference>
<dbReference type="FunFam" id="3.40.50.2000:FF:000073">
    <property type="entry name" value="Starch synthase, chloroplastic/amyloplastic"/>
    <property type="match status" value="1"/>
</dbReference>
<dbReference type="FunFam" id="3.40.50.2000:FF:000090">
    <property type="entry name" value="Starch synthase, chloroplastic/amyloplastic"/>
    <property type="match status" value="1"/>
</dbReference>
<dbReference type="Gene3D" id="3.40.50.2000">
    <property type="entry name" value="Glycogen Phosphorylase B"/>
    <property type="match status" value="2"/>
</dbReference>
<dbReference type="HAMAP" id="MF_00484">
    <property type="entry name" value="Glycogen_synth"/>
    <property type="match status" value="1"/>
</dbReference>
<dbReference type="InterPro" id="IPR001296">
    <property type="entry name" value="Glyco_trans_1"/>
</dbReference>
<dbReference type="InterPro" id="IPR011835">
    <property type="entry name" value="GS/SS"/>
</dbReference>
<dbReference type="InterPro" id="IPR013534">
    <property type="entry name" value="Starch_synth_cat_dom"/>
</dbReference>
<dbReference type="NCBIfam" id="TIGR02095">
    <property type="entry name" value="glgA"/>
    <property type="match status" value="1"/>
</dbReference>
<dbReference type="PANTHER" id="PTHR45825">
    <property type="entry name" value="GRANULE-BOUND STARCH SYNTHASE 1, CHLOROPLASTIC/AMYLOPLASTIC"/>
    <property type="match status" value="1"/>
</dbReference>
<dbReference type="PANTHER" id="PTHR45825:SF3">
    <property type="entry name" value="GRANULE-BOUND STARCH SYNTHASE 1, CHLOROPLASTIC_AMYLOPLASTIC"/>
    <property type="match status" value="1"/>
</dbReference>
<dbReference type="Pfam" id="PF08323">
    <property type="entry name" value="Glyco_transf_5"/>
    <property type="match status" value="1"/>
</dbReference>
<dbReference type="Pfam" id="PF00534">
    <property type="entry name" value="Glycos_transf_1"/>
    <property type="match status" value="1"/>
</dbReference>
<dbReference type="SUPFAM" id="SSF53756">
    <property type="entry name" value="UDP-Glycosyltransferase/glycogen phosphorylase"/>
    <property type="match status" value="1"/>
</dbReference>
<gene>
    <name type="primary">WAXY</name>
    <name type="synonym">SS67</name>
</gene>
<feature type="transit peptide" description="Chloroplast" evidence="1">
    <location>
        <begin position="1"/>
        <end position="76"/>
    </location>
</feature>
<feature type="chain" id="PRO_0000011128" description="Granule-bound starch synthase 1, chloroplastic/amyloplastic">
    <location>
        <begin position="77"/>
        <end position="608"/>
    </location>
</feature>
<feature type="binding site" evidence="1">
    <location>
        <position position="96"/>
    </location>
    <ligand>
        <name>ADP-alpha-D-glucose</name>
        <dbReference type="ChEBI" id="CHEBI:57498"/>
    </ligand>
</feature>
<feature type="sequence conflict" description="In Ref. 2; AAA86423." evidence="2" ref="2">
    <original>V</original>
    <variation>E</variation>
    <location>
        <position position="91"/>
    </location>
</feature>
<feature type="sequence conflict" description="In Ref. 2; AAA86423." evidence="2" ref="2">
    <original>D</original>
    <variation>E</variation>
    <location>
        <position position="133"/>
    </location>
</feature>
<feature type="sequence conflict" description="In Ref. 2; AAA86423." evidence="2" ref="2">
    <original>L</original>
    <variation>P</variation>
    <location>
        <position position="140"/>
    </location>
</feature>
<feature type="sequence conflict" description="In Ref. 2; AAA86423." evidence="2" ref="2">
    <original>N</original>
    <variation>K</variation>
    <location>
        <position position="217"/>
    </location>
</feature>
<feature type="sequence conflict" description="In Ref. 2; AAA86423." evidence="2" ref="2">
    <original>M</original>
    <variation>I</variation>
    <location>
        <position position="549"/>
    </location>
</feature>
<feature type="sequence conflict" description="In Ref. 2; AAA86423." evidence="2" ref="2">
    <original>D</original>
    <variation>E</variation>
    <location>
        <position position="595"/>
    </location>
</feature>
<reference key="1">
    <citation type="journal article" date="2000" name="Plant Biotechnol.">
        <title>Identification of the gene encoding granule-bound starch synthase I in sweet potato (Ipomoea batatas (L.) Lam.).</title>
        <authorList>
            <person name="Kimura T."/>
            <person name="Ideta O."/>
            <person name="Saito A."/>
        </authorList>
    </citation>
    <scope>NUCLEOTIDE SEQUENCE</scope>
    <source>
        <strain>cv. Kokei No. 14</strain>
        <tissue>Tuberous root</tissue>
    </source>
</reference>
<reference key="2">
    <citation type="submission" date="1995-12" db="EMBL/GenBank/DDBJ databases">
        <authorList>
            <person name="Wang S.J."/>
            <person name="Yeh K.W."/>
            <person name="Tsai C.Y."/>
        </authorList>
    </citation>
    <scope>NUCLEOTIDE SEQUENCE [MRNA]</scope>
    <source>
        <strain>cv. Tainong 57</strain>
        <tissue>Tuberous root</tissue>
    </source>
</reference>
<evidence type="ECO:0000250" key="1"/>
<evidence type="ECO:0000305" key="2"/>
<organism>
    <name type="scientific">Ipomoea batatas</name>
    <name type="common">Sweet potato</name>
    <name type="synonym">Convolvulus batatas</name>
    <dbReference type="NCBI Taxonomy" id="4120"/>
    <lineage>
        <taxon>Eukaryota</taxon>
        <taxon>Viridiplantae</taxon>
        <taxon>Streptophyta</taxon>
        <taxon>Embryophyta</taxon>
        <taxon>Tracheophyta</taxon>
        <taxon>Spermatophyta</taxon>
        <taxon>Magnoliopsida</taxon>
        <taxon>eudicotyledons</taxon>
        <taxon>Gunneridae</taxon>
        <taxon>Pentapetalae</taxon>
        <taxon>asterids</taxon>
        <taxon>lamiids</taxon>
        <taxon>Solanales</taxon>
        <taxon>Convolvulaceae</taxon>
        <taxon>Ipomoeeae</taxon>
        <taxon>Ipomoea</taxon>
    </lineage>
</organism>
<accession>Q42857</accession>
<accession>Q93VD9</accession>
<name>SSG1_IPOBA</name>
<proteinExistence type="evidence at transcript level"/>
<protein>
    <recommendedName>
        <fullName>Granule-bound starch synthase 1, chloroplastic/amyloplastic</fullName>
        <ecNumber>2.4.1.242</ecNumber>
    </recommendedName>
    <alternativeName>
        <fullName>Granule-bound starch synthase I</fullName>
        <shortName>GBSS-I</shortName>
    </alternativeName>
</protein>